<organism>
    <name type="scientific">Mus musculus</name>
    <name type="common">Mouse</name>
    <dbReference type="NCBI Taxonomy" id="10090"/>
    <lineage>
        <taxon>Eukaryota</taxon>
        <taxon>Metazoa</taxon>
        <taxon>Chordata</taxon>
        <taxon>Craniata</taxon>
        <taxon>Vertebrata</taxon>
        <taxon>Euteleostomi</taxon>
        <taxon>Mammalia</taxon>
        <taxon>Eutheria</taxon>
        <taxon>Euarchontoglires</taxon>
        <taxon>Glires</taxon>
        <taxon>Rodentia</taxon>
        <taxon>Myomorpha</taxon>
        <taxon>Muroidea</taxon>
        <taxon>Muridae</taxon>
        <taxon>Murinae</taxon>
        <taxon>Mus</taxon>
        <taxon>Mus</taxon>
    </lineage>
</organism>
<name>FPRS1_MOUSE</name>
<proteinExistence type="evidence at protein level"/>
<comment type="function">
    <text evidence="3">Low affinity receptor for N-formyl-methionyl peptides. Receptor for lipoxin A4. May have an olfactory function associated with the identification of pathogens or of pathogenic states.</text>
</comment>
<comment type="subcellular location">
    <subcellularLocation>
        <location>Cell membrane</location>
        <topology>Multi-pass membrane protein</topology>
    </subcellularLocation>
</comment>
<comment type="tissue specificity">
    <text evidence="3 4 5 6">Expressed exclusively in vomeronasal neurons (PubMed:19387439, PubMed:19497865). Expressed in 0.6 % of a subset of sensory neurons located in the basal layer of the vomeronasal organ. Each neuron appears to express only one receptor gene. Expressed mostly in neutrophils, followed by spleen and lung and expressed at very low levels in heart and liver (PubMed:19387439).</text>
</comment>
<comment type="similarity">
    <text evidence="2">Belongs to the G-protein coupled receptor 1 family.</text>
</comment>
<comment type="online information" name="Protein Spotlight">
    <link uri="https://www.proteinspotlight.org/back_issues/114"/>
    <text>A sickly smell - Issue 114 of February 2010</text>
</comment>
<accession>O08790</accession>
<accession>O88535</accession>
<keyword id="KW-1003">Cell membrane</keyword>
<keyword id="KW-0145">Chemotaxis</keyword>
<keyword id="KW-1015">Disulfide bond</keyword>
<keyword id="KW-0297">G-protein coupled receptor</keyword>
<keyword id="KW-0325">Glycoprotein</keyword>
<keyword id="KW-0472">Membrane</keyword>
<keyword id="KW-0675">Receptor</keyword>
<keyword id="KW-1185">Reference proteome</keyword>
<keyword id="KW-0807">Transducer</keyword>
<keyword id="KW-0812">Transmembrane</keyword>
<keyword id="KW-1133">Transmembrane helix</keyword>
<protein>
    <recommendedName>
        <fullName>Formyl peptide receptor-related sequence 1</fullName>
    </recommendedName>
    <alternativeName>
        <fullName>FMLP-related receptor I</fullName>
        <shortName>FMLP-R-I</shortName>
    </alternativeName>
    <alternativeName>
        <fullName>Formyl peptide receptor related sequence 1</fullName>
    </alternativeName>
    <alternativeName>
        <fullName>Formyl peptide receptor-like 1</fullName>
    </alternativeName>
    <alternativeName>
        <fullName>Lipoxin A4 receptor</fullName>
        <shortName>LXA4 receptor</shortName>
    </alternativeName>
    <alternativeName>
        <fullName>N-formyl peptide receptor 2</fullName>
    </alternativeName>
    <alternativeName>
        <fullName>N-formyl peptide receptor 3</fullName>
    </alternativeName>
</protein>
<feature type="chain" id="PRO_0000069453" description="Formyl peptide receptor-related sequence 1">
    <location>
        <begin position="1"/>
        <end position="351"/>
    </location>
</feature>
<feature type="topological domain" description="Extracellular" evidence="1">
    <location>
        <begin position="1"/>
        <end position="27"/>
    </location>
</feature>
<feature type="transmembrane region" description="Helical; Name=1" evidence="1">
    <location>
        <begin position="28"/>
        <end position="50"/>
    </location>
</feature>
<feature type="topological domain" description="Cytoplasmic" evidence="1">
    <location>
        <begin position="51"/>
        <end position="61"/>
    </location>
</feature>
<feature type="transmembrane region" description="Helical; Name=2" evidence="1">
    <location>
        <begin position="62"/>
        <end position="83"/>
    </location>
</feature>
<feature type="topological domain" description="Extracellular" evidence="1">
    <location>
        <begin position="84"/>
        <end position="100"/>
    </location>
</feature>
<feature type="transmembrane region" description="Helical; Name=3" evidence="1">
    <location>
        <begin position="101"/>
        <end position="121"/>
    </location>
</feature>
<feature type="topological domain" description="Cytoplasmic" evidence="1">
    <location>
        <begin position="122"/>
        <end position="140"/>
    </location>
</feature>
<feature type="transmembrane region" description="Helical; Name=4" evidence="1">
    <location>
        <begin position="141"/>
        <end position="162"/>
    </location>
</feature>
<feature type="topological domain" description="Extracellular" evidence="1">
    <location>
        <begin position="163"/>
        <end position="205"/>
    </location>
</feature>
<feature type="transmembrane region" description="Helical; Name=5" evidence="1">
    <location>
        <begin position="206"/>
        <end position="226"/>
    </location>
</feature>
<feature type="topological domain" description="Cytoplasmic" evidence="1">
    <location>
        <begin position="227"/>
        <end position="242"/>
    </location>
</feature>
<feature type="transmembrane region" description="Helical; Name=6" evidence="1">
    <location>
        <begin position="243"/>
        <end position="266"/>
    </location>
</feature>
<feature type="topological domain" description="Extracellular" evidence="1">
    <location>
        <begin position="267"/>
        <end position="286"/>
    </location>
</feature>
<feature type="transmembrane region" description="Helical; Name=7" evidence="1">
    <location>
        <begin position="287"/>
        <end position="306"/>
    </location>
</feature>
<feature type="topological domain" description="Cytoplasmic" evidence="1">
    <location>
        <begin position="307"/>
        <end position="351"/>
    </location>
</feature>
<feature type="glycosylation site" description="N-linked (GlcNAc...) asparagine" evidence="1">
    <location>
        <position position="4"/>
    </location>
</feature>
<feature type="glycosylation site" description="N-linked (GlcNAc...) asparagine" evidence="1">
    <location>
        <position position="10"/>
    </location>
</feature>
<feature type="disulfide bond" evidence="2">
    <location>
        <begin position="98"/>
        <end position="176"/>
    </location>
</feature>
<feature type="sequence conflict" description="In Ref. 1; AAC53198." evidence="7" ref="1">
    <original>T</original>
    <variation>S</variation>
    <location>
        <position position="3"/>
    </location>
</feature>
<feature type="sequence conflict" description="In Ref. 1; AAC53198." evidence="7" ref="1">
    <original>P</original>
    <variation>H</variation>
    <location>
        <position position="8"/>
    </location>
</feature>
<feature type="sequence conflict" description="In Ref. 1; AAC53198." evidence="7" ref="1">
    <original>D</original>
    <variation>E</variation>
    <location>
        <position position="13"/>
    </location>
</feature>
<feature type="sequence conflict" description="In Ref. 1; AAC53198." evidence="7" ref="1">
    <original>I</original>
    <variation>V</variation>
    <location>
        <position position="16"/>
    </location>
</feature>
<feature type="sequence conflict" description="In Ref. 2; AAC34584." evidence="7" ref="2">
    <location>
        <begin position="142"/>
        <end position="145"/>
    </location>
</feature>
<feature type="sequence conflict" description="In Ref. 2; AAC34584." evidence="7" ref="2">
    <original>T</original>
    <variation>Y</variation>
    <location>
        <position position="226"/>
    </location>
</feature>
<feature type="sequence conflict" description="In Ref. 2; AAC34584." evidence="7" ref="2">
    <original>F</original>
    <variation>S</variation>
    <location>
        <position position="240"/>
    </location>
</feature>
<feature type="sequence conflict" description="In Ref. 2; AAC34584." evidence="7" ref="2">
    <original>I</original>
    <variation>M</variation>
    <location>
        <position position="300"/>
    </location>
</feature>
<feature type="sequence conflict" description="In Ref. 2; AAC34584." evidence="7" ref="2">
    <original>Q</original>
    <variation>P</variation>
    <location>
        <position position="322"/>
    </location>
</feature>
<evidence type="ECO:0000255" key="1"/>
<evidence type="ECO:0000255" key="2">
    <source>
        <dbReference type="PROSITE-ProRule" id="PRU00521"/>
    </source>
</evidence>
<evidence type="ECO:0000269" key="3">
    <source>
    </source>
</evidence>
<evidence type="ECO:0000269" key="4">
    <source>
    </source>
</evidence>
<evidence type="ECO:0000269" key="5">
    <source>
    </source>
</evidence>
<evidence type="ECO:0000269" key="6">
    <source>
    </source>
</evidence>
<evidence type="ECO:0000305" key="7"/>
<reference key="1">
    <citation type="journal article" date="1997" name="J. Exp. Med.">
        <title>Aspirin-triggered 15-epi-lipoxin A4 (LXA4) and LXA4 stable analogues are potent inhibitors of acute inflammation: evidence for anti-inflammatory receptors.</title>
        <authorList>
            <person name="Takano T."/>
            <person name="Fiore S."/>
            <person name="Maddox J.F."/>
            <person name="Brady H.R."/>
            <person name="Petasis N.A."/>
            <person name="Serhan C.N."/>
        </authorList>
    </citation>
    <scope>NUCLEOTIDE SEQUENCE [MRNA]</scope>
    <scope>LIGAND-BINDING</scope>
    <scope>TISSUE SPECIFICITY</scope>
    <source>
        <tissue>Neutrophil</tissue>
        <tissue>Spleen</tissue>
    </source>
</reference>
<reference key="2">
    <citation type="journal article" date="1998" name="Genomics">
        <title>Differential expansion of the N-formylpeptide receptor gene cluster in human and mouse.</title>
        <authorList>
            <person name="Gao J.-L."/>
            <person name="Chen H."/>
            <person name="Filie J.D."/>
            <person name="Kozak C.A."/>
            <person name="Murphy P.M."/>
        </authorList>
    </citation>
    <scope>NUCLEOTIDE SEQUENCE [GENOMIC DNA]</scope>
    <scope>TISSUE SPECIFICITY</scope>
</reference>
<reference key="3">
    <citation type="journal article" date="2009" name="Nature">
        <title>Formyl peptide receptor-like proteins are a novel family of vomeronasal chemosensors.</title>
        <authorList>
            <person name="Riviere S."/>
            <person name="Challet L."/>
            <person name="Fluegge D."/>
            <person name="Spehr M."/>
            <person name="Rodriguez I."/>
        </authorList>
    </citation>
    <scope>TISSUE SPECIFICITY</scope>
    <scope>FUNCTION</scope>
</reference>
<reference key="4">
    <citation type="journal article" date="2009" name="Proc. Natl. Acad. Sci. U.S.A.">
        <title>Formyl peptide receptors are candidate chemosensory receptors in the vomeronasal organ.</title>
        <authorList>
            <person name="Liberles S.D."/>
            <person name="Horowitz L.F."/>
            <person name="Kuang D."/>
            <person name="Contos J.J."/>
            <person name="Wilson K.L."/>
            <person name="Siltberg-Liberles J."/>
            <person name="Liberles D.A."/>
            <person name="Buck L.B."/>
        </authorList>
    </citation>
    <scope>TISSUE SPECIFICITY</scope>
</reference>
<dbReference type="EMBL" id="U78299">
    <property type="protein sequence ID" value="AAC53198.1"/>
    <property type="molecule type" value="mRNA"/>
</dbReference>
<dbReference type="EMBL" id="AF071179">
    <property type="protein sequence ID" value="AAC34584.1"/>
    <property type="molecule type" value="Genomic_DNA"/>
</dbReference>
<dbReference type="CCDS" id="CCDS28420.1"/>
<dbReference type="RefSeq" id="NP_032068.2">
    <property type="nucleotide sequence ID" value="NM_008042.2"/>
</dbReference>
<dbReference type="SMR" id="O08790"/>
<dbReference type="FunCoup" id="O08790">
    <property type="interactions" value="503"/>
</dbReference>
<dbReference type="STRING" id="10090.ENSMUSP00000093316"/>
<dbReference type="BindingDB" id="O08790"/>
<dbReference type="ChEMBL" id="CHEMBL3407315"/>
<dbReference type="GuidetoPHARMACOLOGY" id="224"/>
<dbReference type="GlyCosmos" id="O08790">
    <property type="glycosylation" value="2 sites, No reported glycans"/>
</dbReference>
<dbReference type="GlyGen" id="O08790">
    <property type="glycosylation" value="2 sites"/>
</dbReference>
<dbReference type="PhosphoSitePlus" id="O08790"/>
<dbReference type="PaxDb" id="10090-ENSMUSP00000093316"/>
<dbReference type="DNASU" id="14294"/>
<dbReference type="Ensembl" id="ENSMUST00000054871.12">
    <property type="protein sequence ID" value="ENSMUSP00000093316.3"/>
    <property type="gene ID" value="ENSMUSG00000079700.8"/>
</dbReference>
<dbReference type="Ensembl" id="ENSMUST00000115565.2">
    <property type="protein sequence ID" value="ENSMUSP00000111227.2"/>
    <property type="gene ID" value="ENSMUSG00000079700.8"/>
</dbReference>
<dbReference type="GeneID" id="14294"/>
<dbReference type="KEGG" id="mmu:14294"/>
<dbReference type="UCSC" id="uc008apv.1">
    <property type="organism name" value="mouse"/>
</dbReference>
<dbReference type="AGR" id="MGI:1194495"/>
<dbReference type="CTD" id="2359"/>
<dbReference type="MGI" id="MGI:1194495">
    <property type="gene designation" value="Fpr3"/>
</dbReference>
<dbReference type="VEuPathDB" id="HostDB:ENSMUSG00000079700"/>
<dbReference type="eggNOG" id="KOG3656">
    <property type="taxonomic scope" value="Eukaryota"/>
</dbReference>
<dbReference type="GeneTree" id="ENSGT01020000230438"/>
<dbReference type="HOGENOM" id="CLU_009579_8_0_1"/>
<dbReference type="InParanoid" id="O08790"/>
<dbReference type="OMA" id="LIEMAYH"/>
<dbReference type="OrthoDB" id="6088892at2759"/>
<dbReference type="PhylomeDB" id="O08790"/>
<dbReference type="TreeFam" id="TF330976"/>
<dbReference type="Reactome" id="R-MMU-418594">
    <property type="pathway name" value="G alpha (i) signalling events"/>
</dbReference>
<dbReference type="Reactome" id="R-MMU-444473">
    <property type="pathway name" value="Formyl peptide receptors bind formyl peptides and many other ligands"/>
</dbReference>
<dbReference type="BioGRID-ORCS" id="14294">
    <property type="hits" value="1 hit in 75 CRISPR screens"/>
</dbReference>
<dbReference type="ChiTaRS" id="Fpr3">
    <property type="organism name" value="mouse"/>
</dbReference>
<dbReference type="PRO" id="PR:O08790"/>
<dbReference type="Proteomes" id="UP000000589">
    <property type="component" value="Chromosome 17"/>
</dbReference>
<dbReference type="RNAct" id="O08790">
    <property type="molecule type" value="protein"/>
</dbReference>
<dbReference type="Bgee" id="ENSMUSG00000079700">
    <property type="expression patterns" value="Expressed in lumbar dorsal root ganglion and 6 other cell types or tissues"/>
</dbReference>
<dbReference type="GO" id="GO:0005886">
    <property type="term" value="C:plasma membrane"/>
    <property type="evidence" value="ECO:0007669"/>
    <property type="project" value="UniProtKB-SubCell"/>
</dbReference>
<dbReference type="GO" id="GO:0004930">
    <property type="term" value="F:G protein-coupled receptor activity"/>
    <property type="evidence" value="ECO:0007669"/>
    <property type="project" value="UniProtKB-KW"/>
</dbReference>
<dbReference type="GO" id="GO:0038023">
    <property type="term" value="F:signaling receptor activity"/>
    <property type="evidence" value="ECO:0000314"/>
    <property type="project" value="MGI"/>
</dbReference>
<dbReference type="GO" id="GO:0006935">
    <property type="term" value="P:chemotaxis"/>
    <property type="evidence" value="ECO:0000304"/>
    <property type="project" value="MGI"/>
</dbReference>
<dbReference type="GO" id="GO:0007186">
    <property type="term" value="P:G protein-coupled receptor signaling pathway"/>
    <property type="evidence" value="ECO:0000314"/>
    <property type="project" value="MGI"/>
</dbReference>
<dbReference type="FunFam" id="1.20.1070.10:FF:000034">
    <property type="entry name" value="G-protein coupled receptor 1"/>
    <property type="match status" value="1"/>
</dbReference>
<dbReference type="Gene3D" id="1.20.1070.10">
    <property type="entry name" value="Rhodopsin 7-helix transmembrane proteins"/>
    <property type="match status" value="1"/>
</dbReference>
<dbReference type="InterPro" id="IPR000826">
    <property type="entry name" value="Formyl_rcpt-rel"/>
</dbReference>
<dbReference type="InterPro" id="IPR000276">
    <property type="entry name" value="GPCR_Rhodpsn"/>
</dbReference>
<dbReference type="InterPro" id="IPR017452">
    <property type="entry name" value="GPCR_Rhodpsn_7TM"/>
</dbReference>
<dbReference type="PANTHER" id="PTHR24225">
    <property type="entry name" value="CHEMOTACTIC RECEPTOR"/>
    <property type="match status" value="1"/>
</dbReference>
<dbReference type="PANTHER" id="PTHR24225:SF0">
    <property type="entry name" value="N-FORMYL PEPTIDE RECEPTOR 2"/>
    <property type="match status" value="1"/>
</dbReference>
<dbReference type="Pfam" id="PF00001">
    <property type="entry name" value="7tm_1"/>
    <property type="match status" value="1"/>
</dbReference>
<dbReference type="PRINTS" id="PR00526">
    <property type="entry name" value="FMETLEUPHER"/>
</dbReference>
<dbReference type="PRINTS" id="PR00237">
    <property type="entry name" value="GPCRRHODOPSN"/>
</dbReference>
<dbReference type="SUPFAM" id="SSF81321">
    <property type="entry name" value="Family A G protein-coupled receptor-like"/>
    <property type="match status" value="1"/>
</dbReference>
<dbReference type="PROSITE" id="PS00237">
    <property type="entry name" value="G_PROTEIN_RECEP_F1_1"/>
    <property type="match status" value="1"/>
</dbReference>
<dbReference type="PROSITE" id="PS50262">
    <property type="entry name" value="G_PROTEIN_RECEP_F1_2"/>
    <property type="match status" value="1"/>
</dbReference>
<gene>
    <name type="primary">Fpr-s1</name>
    <name type="synonym">Fpr2</name>
    <name type="synonym">Fpr3</name>
    <name type="synonym">Fprl1</name>
    <name type="synonym">Lxa4r</name>
</gene>
<sequence>METNYSIPLNGSDVVIYDSTISRVLWILSMVVVSITFFLGVLGNGLVIWVAGFRMPHTVTTIWYLNLALADFSFTATLPFLLVEMAMKEKWPFGWFLCKLVHIAVDVNLFGSVFLIAVIALDRCICVLHPVWAQNHRTVSLARNVVVGSWIFALILTLPLFLFLTTVRDARGDVHCRLSFVSWGNSVEERLNTAITFVTTRGIIRFIVSFSLPMSFVAICYGLITTKIHKKAFVNSSRPFRVLTGVVASFFICWFPFQLVALLGTVWLKEMQFSGSYKIIGRLVNPTSSLAFFNSCLNPILYVFMGQDFQERLIHSLSSRLQRALSEDSGHISDTRTNLASLPEDIEIKAI</sequence>